<organism>
    <name type="scientific">Caulobacter sp. (strain K31)</name>
    <dbReference type="NCBI Taxonomy" id="366602"/>
    <lineage>
        <taxon>Bacteria</taxon>
        <taxon>Pseudomonadati</taxon>
        <taxon>Pseudomonadota</taxon>
        <taxon>Alphaproteobacteria</taxon>
        <taxon>Caulobacterales</taxon>
        <taxon>Caulobacteraceae</taxon>
        <taxon>Caulobacter</taxon>
    </lineage>
</organism>
<gene>
    <name evidence="1" type="primary">bioB</name>
    <name type="ordered locus">Caul_4625</name>
</gene>
<reference key="1">
    <citation type="submission" date="2008-01" db="EMBL/GenBank/DDBJ databases">
        <title>Complete sequence of chromosome of Caulobacter sp. K31.</title>
        <authorList>
            <consortium name="US DOE Joint Genome Institute"/>
            <person name="Copeland A."/>
            <person name="Lucas S."/>
            <person name="Lapidus A."/>
            <person name="Barry K."/>
            <person name="Glavina del Rio T."/>
            <person name="Dalin E."/>
            <person name="Tice H."/>
            <person name="Pitluck S."/>
            <person name="Bruce D."/>
            <person name="Goodwin L."/>
            <person name="Thompson L.S."/>
            <person name="Brettin T."/>
            <person name="Detter J.C."/>
            <person name="Han C."/>
            <person name="Schmutz J."/>
            <person name="Larimer F."/>
            <person name="Land M."/>
            <person name="Hauser L."/>
            <person name="Kyrpides N."/>
            <person name="Kim E."/>
            <person name="Stephens C."/>
            <person name="Richardson P."/>
        </authorList>
    </citation>
    <scope>NUCLEOTIDE SEQUENCE [LARGE SCALE GENOMIC DNA]</scope>
    <source>
        <strain>K31</strain>
    </source>
</reference>
<name>BIOB_CAUSK</name>
<comment type="function">
    <text evidence="1">Catalyzes the conversion of dethiobiotin (DTB) to biotin by the insertion of a sulfur atom into dethiobiotin via a radical-based mechanism.</text>
</comment>
<comment type="catalytic activity">
    <reaction evidence="1">
        <text>(4R,5S)-dethiobiotin + (sulfur carrier)-SH + 2 reduced [2Fe-2S]-[ferredoxin] + 2 S-adenosyl-L-methionine = (sulfur carrier)-H + biotin + 2 5'-deoxyadenosine + 2 L-methionine + 2 oxidized [2Fe-2S]-[ferredoxin]</text>
        <dbReference type="Rhea" id="RHEA:22060"/>
        <dbReference type="Rhea" id="RHEA-COMP:10000"/>
        <dbReference type="Rhea" id="RHEA-COMP:10001"/>
        <dbReference type="Rhea" id="RHEA-COMP:14737"/>
        <dbReference type="Rhea" id="RHEA-COMP:14739"/>
        <dbReference type="ChEBI" id="CHEBI:17319"/>
        <dbReference type="ChEBI" id="CHEBI:29917"/>
        <dbReference type="ChEBI" id="CHEBI:33737"/>
        <dbReference type="ChEBI" id="CHEBI:33738"/>
        <dbReference type="ChEBI" id="CHEBI:57586"/>
        <dbReference type="ChEBI" id="CHEBI:57844"/>
        <dbReference type="ChEBI" id="CHEBI:59789"/>
        <dbReference type="ChEBI" id="CHEBI:64428"/>
        <dbReference type="ChEBI" id="CHEBI:149473"/>
        <dbReference type="EC" id="2.8.1.6"/>
    </reaction>
</comment>
<comment type="cofactor">
    <cofactor evidence="1">
        <name>[4Fe-4S] cluster</name>
        <dbReference type="ChEBI" id="CHEBI:49883"/>
    </cofactor>
    <text evidence="1">Binds 1 [4Fe-4S] cluster. The cluster is coordinated with 3 cysteines and an exchangeable S-adenosyl-L-methionine.</text>
</comment>
<comment type="cofactor">
    <cofactor evidence="1">
        <name>[2Fe-2S] cluster</name>
        <dbReference type="ChEBI" id="CHEBI:190135"/>
    </cofactor>
    <text evidence="1">Binds 1 [2Fe-2S] cluster. The cluster is coordinated with 3 cysteines and 1 arginine.</text>
</comment>
<comment type="pathway">
    <text evidence="1">Cofactor biosynthesis; biotin biosynthesis; biotin from 7,8-diaminononanoate: step 2/2.</text>
</comment>
<comment type="subunit">
    <text evidence="1">Homodimer.</text>
</comment>
<comment type="similarity">
    <text evidence="1">Belongs to the radical SAM superfamily. Biotin synthase family.</text>
</comment>
<keyword id="KW-0001">2Fe-2S</keyword>
<keyword id="KW-0004">4Fe-4S</keyword>
<keyword id="KW-0093">Biotin biosynthesis</keyword>
<keyword id="KW-0408">Iron</keyword>
<keyword id="KW-0411">Iron-sulfur</keyword>
<keyword id="KW-0479">Metal-binding</keyword>
<keyword id="KW-0949">S-adenosyl-L-methionine</keyword>
<keyword id="KW-0808">Transferase</keyword>
<protein>
    <recommendedName>
        <fullName evidence="1">Biotin synthase</fullName>
        <ecNumber evidence="1">2.8.1.6</ecNumber>
    </recommendedName>
</protein>
<evidence type="ECO:0000255" key="1">
    <source>
        <dbReference type="HAMAP-Rule" id="MF_01694"/>
    </source>
</evidence>
<evidence type="ECO:0000255" key="2">
    <source>
        <dbReference type="PROSITE-ProRule" id="PRU01266"/>
    </source>
</evidence>
<dbReference type="EC" id="2.8.1.6" evidence="1"/>
<dbReference type="EMBL" id="CP000927">
    <property type="protein sequence ID" value="ABZ73745.1"/>
    <property type="molecule type" value="Genomic_DNA"/>
</dbReference>
<dbReference type="SMR" id="B0T1Y4"/>
<dbReference type="STRING" id="366602.Caul_4625"/>
<dbReference type="KEGG" id="cak:Caul_4625"/>
<dbReference type="eggNOG" id="COG0502">
    <property type="taxonomic scope" value="Bacteria"/>
</dbReference>
<dbReference type="HOGENOM" id="CLU_033172_1_2_5"/>
<dbReference type="OrthoDB" id="9786826at2"/>
<dbReference type="UniPathway" id="UPA00078">
    <property type="reaction ID" value="UER00162"/>
</dbReference>
<dbReference type="GO" id="GO:0051537">
    <property type="term" value="F:2 iron, 2 sulfur cluster binding"/>
    <property type="evidence" value="ECO:0007669"/>
    <property type="project" value="UniProtKB-KW"/>
</dbReference>
<dbReference type="GO" id="GO:0051539">
    <property type="term" value="F:4 iron, 4 sulfur cluster binding"/>
    <property type="evidence" value="ECO:0007669"/>
    <property type="project" value="UniProtKB-KW"/>
</dbReference>
<dbReference type="GO" id="GO:0004076">
    <property type="term" value="F:biotin synthase activity"/>
    <property type="evidence" value="ECO:0007669"/>
    <property type="project" value="UniProtKB-UniRule"/>
</dbReference>
<dbReference type="GO" id="GO:0005506">
    <property type="term" value="F:iron ion binding"/>
    <property type="evidence" value="ECO:0007669"/>
    <property type="project" value="UniProtKB-UniRule"/>
</dbReference>
<dbReference type="GO" id="GO:0009102">
    <property type="term" value="P:biotin biosynthetic process"/>
    <property type="evidence" value="ECO:0007669"/>
    <property type="project" value="UniProtKB-UniRule"/>
</dbReference>
<dbReference type="CDD" id="cd01335">
    <property type="entry name" value="Radical_SAM"/>
    <property type="match status" value="1"/>
</dbReference>
<dbReference type="FunFam" id="3.20.20.70:FF:000011">
    <property type="entry name" value="Biotin synthase"/>
    <property type="match status" value="1"/>
</dbReference>
<dbReference type="Gene3D" id="3.20.20.70">
    <property type="entry name" value="Aldolase class I"/>
    <property type="match status" value="1"/>
</dbReference>
<dbReference type="HAMAP" id="MF_01694">
    <property type="entry name" value="BioB"/>
    <property type="match status" value="1"/>
</dbReference>
<dbReference type="InterPro" id="IPR013785">
    <property type="entry name" value="Aldolase_TIM"/>
</dbReference>
<dbReference type="InterPro" id="IPR010722">
    <property type="entry name" value="BATS_dom"/>
</dbReference>
<dbReference type="InterPro" id="IPR002684">
    <property type="entry name" value="Biotin_synth/BioAB"/>
</dbReference>
<dbReference type="InterPro" id="IPR024177">
    <property type="entry name" value="Biotin_synthase"/>
</dbReference>
<dbReference type="InterPro" id="IPR006638">
    <property type="entry name" value="Elp3/MiaA/NifB-like_rSAM"/>
</dbReference>
<dbReference type="InterPro" id="IPR007197">
    <property type="entry name" value="rSAM"/>
</dbReference>
<dbReference type="NCBIfam" id="TIGR00433">
    <property type="entry name" value="bioB"/>
    <property type="match status" value="1"/>
</dbReference>
<dbReference type="PANTHER" id="PTHR22976">
    <property type="entry name" value="BIOTIN SYNTHASE"/>
    <property type="match status" value="1"/>
</dbReference>
<dbReference type="PANTHER" id="PTHR22976:SF2">
    <property type="entry name" value="BIOTIN SYNTHASE, MITOCHONDRIAL"/>
    <property type="match status" value="1"/>
</dbReference>
<dbReference type="Pfam" id="PF06968">
    <property type="entry name" value="BATS"/>
    <property type="match status" value="1"/>
</dbReference>
<dbReference type="Pfam" id="PF04055">
    <property type="entry name" value="Radical_SAM"/>
    <property type="match status" value="1"/>
</dbReference>
<dbReference type="PIRSF" id="PIRSF001619">
    <property type="entry name" value="Biotin_synth"/>
    <property type="match status" value="1"/>
</dbReference>
<dbReference type="SFLD" id="SFLDF00272">
    <property type="entry name" value="biotin_synthase"/>
    <property type="match status" value="1"/>
</dbReference>
<dbReference type="SFLD" id="SFLDS00029">
    <property type="entry name" value="Radical_SAM"/>
    <property type="match status" value="1"/>
</dbReference>
<dbReference type="SMART" id="SM00876">
    <property type="entry name" value="BATS"/>
    <property type="match status" value="1"/>
</dbReference>
<dbReference type="SMART" id="SM00729">
    <property type="entry name" value="Elp3"/>
    <property type="match status" value="1"/>
</dbReference>
<dbReference type="SUPFAM" id="SSF102114">
    <property type="entry name" value="Radical SAM enzymes"/>
    <property type="match status" value="1"/>
</dbReference>
<dbReference type="PROSITE" id="PS51918">
    <property type="entry name" value="RADICAL_SAM"/>
    <property type="match status" value="1"/>
</dbReference>
<proteinExistence type="inferred from homology"/>
<feature type="chain" id="PRO_0000381293" description="Biotin synthase">
    <location>
        <begin position="1"/>
        <end position="340"/>
    </location>
</feature>
<feature type="domain" description="Radical SAM core" evidence="2">
    <location>
        <begin position="47"/>
        <end position="269"/>
    </location>
</feature>
<feature type="binding site" evidence="1">
    <location>
        <position position="62"/>
    </location>
    <ligand>
        <name>[4Fe-4S] cluster</name>
        <dbReference type="ChEBI" id="CHEBI:49883"/>
        <note>4Fe-4S-S-AdoMet</note>
    </ligand>
</feature>
<feature type="binding site" evidence="1">
    <location>
        <position position="66"/>
    </location>
    <ligand>
        <name>[4Fe-4S] cluster</name>
        <dbReference type="ChEBI" id="CHEBI:49883"/>
        <note>4Fe-4S-S-AdoMet</note>
    </ligand>
</feature>
<feature type="binding site" evidence="1">
    <location>
        <position position="69"/>
    </location>
    <ligand>
        <name>[4Fe-4S] cluster</name>
        <dbReference type="ChEBI" id="CHEBI:49883"/>
        <note>4Fe-4S-S-AdoMet</note>
    </ligand>
</feature>
<feature type="binding site" evidence="1">
    <location>
        <position position="106"/>
    </location>
    <ligand>
        <name>[2Fe-2S] cluster</name>
        <dbReference type="ChEBI" id="CHEBI:190135"/>
    </ligand>
</feature>
<feature type="binding site" evidence="1">
    <location>
        <position position="137"/>
    </location>
    <ligand>
        <name>[2Fe-2S] cluster</name>
        <dbReference type="ChEBI" id="CHEBI:190135"/>
    </ligand>
</feature>
<feature type="binding site" evidence="1">
    <location>
        <position position="197"/>
    </location>
    <ligand>
        <name>[2Fe-2S] cluster</name>
        <dbReference type="ChEBI" id="CHEBI:190135"/>
    </ligand>
</feature>
<feature type="binding site" evidence="1">
    <location>
        <position position="273"/>
    </location>
    <ligand>
        <name>[2Fe-2S] cluster</name>
        <dbReference type="ChEBI" id="CHEBI:190135"/>
    </ligand>
</feature>
<sequence length="340" mass="36966">MTQINAQLAHEPRHDWTLPQVEALFDLPFMELMFQAATVHRAWFDPSELQLSQLLSVKTGGCAENCGYCSQSAHFKTGLKAEKLMDAEVVIAKAREARDGGAQRFCMGAAWRELKDRDLPKLAAMIGGVKALGLETCATLGMLTAEQAKQLKDAGLDYYNHNLDTGPEYYGDVVSTRTYQERLDTLAYVRDAGMSTCCGGIVGMGETRRDRASLLHQLATLPSHPDSLPVNALVPVAGTPLGDKVKREGEIDGLEFVRTVAVARIVCPKSMVRLSAGRDDMSRELQALCFMAGANSIFVGGKLLTTPLPNMDDDSKLFLDLNMRPMGSAKIVAPESVAAE</sequence>
<accession>B0T1Y4</accession>